<evidence type="ECO:0000255" key="1">
    <source>
        <dbReference type="HAMAP-Rule" id="MF_00558"/>
    </source>
</evidence>
<accession>Q4FVH9</accession>
<protein>
    <recommendedName>
        <fullName evidence="1">Succinate--CoA ligase [ADP-forming] subunit beta</fullName>
        <ecNumber evidence="1">6.2.1.5</ecNumber>
    </recommendedName>
    <alternativeName>
        <fullName evidence="1">Succinyl-CoA synthetase subunit beta</fullName>
        <shortName evidence="1">SCS-beta</shortName>
    </alternativeName>
</protein>
<keyword id="KW-0067">ATP-binding</keyword>
<keyword id="KW-0436">Ligase</keyword>
<keyword id="KW-0460">Magnesium</keyword>
<keyword id="KW-0479">Metal-binding</keyword>
<keyword id="KW-0547">Nucleotide-binding</keyword>
<keyword id="KW-1185">Reference proteome</keyword>
<keyword id="KW-0816">Tricarboxylic acid cycle</keyword>
<sequence>MNLHEYQAKELLKSYGLPIQEGLIAYSGDEAAAAFDKTPTDIAVIKAQVHAGGRGKAGGVKLVKTREEAKQVTDELIGTNLVTYQTDAAGQPVNFVLVAEDMYPVQTELYLGAVVDRSSRRVTFMASTEGGVEIEKVAEETPEKIFKVSIDPLVGLLPFQAREVAFKLGLEGKQISQFVKLMTGAYQAFVENDIDLLEINPLAVRENGEIVCVDGKISIDSNALYRLPKIAALQDKSQENERELKAAEFDLNYVALEGNIGCMVNGAGLAMATMDIIKLYGGKPANFLDVGGGATKDRVVEAFKIILEDSSVEGVLINIFGGIVRCDMIAEAIIAAIKEVDVKVPVVVRLEGNNAELGAKILEESGLKLISAQGLSDAAQKIVDAVKA</sequence>
<feature type="chain" id="PRO_1000082176" description="Succinate--CoA ligase [ADP-forming] subunit beta">
    <location>
        <begin position="1"/>
        <end position="388"/>
    </location>
</feature>
<feature type="domain" description="ATP-grasp" evidence="1">
    <location>
        <begin position="9"/>
        <end position="245"/>
    </location>
</feature>
<feature type="binding site" evidence="1">
    <location>
        <position position="46"/>
    </location>
    <ligand>
        <name>ATP</name>
        <dbReference type="ChEBI" id="CHEBI:30616"/>
    </ligand>
</feature>
<feature type="binding site" evidence="1">
    <location>
        <begin position="53"/>
        <end position="55"/>
    </location>
    <ligand>
        <name>ATP</name>
        <dbReference type="ChEBI" id="CHEBI:30616"/>
    </ligand>
</feature>
<feature type="binding site" evidence="1">
    <location>
        <position position="100"/>
    </location>
    <ligand>
        <name>ATP</name>
        <dbReference type="ChEBI" id="CHEBI:30616"/>
    </ligand>
</feature>
<feature type="binding site" evidence="1">
    <location>
        <position position="103"/>
    </location>
    <ligand>
        <name>ATP</name>
        <dbReference type="ChEBI" id="CHEBI:30616"/>
    </ligand>
</feature>
<feature type="binding site" evidence="1">
    <location>
        <position position="108"/>
    </location>
    <ligand>
        <name>ATP</name>
        <dbReference type="ChEBI" id="CHEBI:30616"/>
    </ligand>
</feature>
<feature type="binding site" evidence="1">
    <location>
        <position position="200"/>
    </location>
    <ligand>
        <name>Mg(2+)</name>
        <dbReference type="ChEBI" id="CHEBI:18420"/>
    </ligand>
</feature>
<feature type="binding site" evidence="1">
    <location>
        <position position="214"/>
    </location>
    <ligand>
        <name>Mg(2+)</name>
        <dbReference type="ChEBI" id="CHEBI:18420"/>
    </ligand>
</feature>
<feature type="binding site" evidence="1">
    <location>
        <position position="265"/>
    </location>
    <ligand>
        <name>substrate</name>
        <note>ligand shared with subunit alpha</note>
    </ligand>
</feature>
<feature type="binding site" evidence="1">
    <location>
        <begin position="322"/>
        <end position="324"/>
    </location>
    <ligand>
        <name>substrate</name>
        <note>ligand shared with subunit alpha</note>
    </ligand>
</feature>
<gene>
    <name evidence="1" type="primary">sucC</name>
    <name type="ordered locus">Psyc_0105</name>
</gene>
<reference key="1">
    <citation type="journal article" date="2010" name="Appl. Environ. Microbiol.">
        <title>The genome sequence of Psychrobacter arcticus 273-4, a psychroactive Siberian permafrost bacterium, reveals mechanisms for adaptation to low-temperature growth.</title>
        <authorList>
            <person name="Ayala-del-Rio H.L."/>
            <person name="Chain P.S."/>
            <person name="Grzymski J.J."/>
            <person name="Ponder M.A."/>
            <person name="Ivanova N."/>
            <person name="Bergholz P.W."/>
            <person name="Di Bartolo G."/>
            <person name="Hauser L."/>
            <person name="Land M."/>
            <person name="Bakermans C."/>
            <person name="Rodrigues D."/>
            <person name="Klappenbach J."/>
            <person name="Zarka D."/>
            <person name="Larimer F."/>
            <person name="Richardson P."/>
            <person name="Murray A."/>
            <person name="Thomashow M."/>
            <person name="Tiedje J.M."/>
        </authorList>
    </citation>
    <scope>NUCLEOTIDE SEQUENCE [LARGE SCALE GENOMIC DNA]</scope>
    <source>
        <strain>DSM 17307 / VKM B-2377 / 273-4</strain>
    </source>
</reference>
<organism>
    <name type="scientific">Psychrobacter arcticus (strain DSM 17307 / VKM B-2377 / 273-4)</name>
    <dbReference type="NCBI Taxonomy" id="259536"/>
    <lineage>
        <taxon>Bacteria</taxon>
        <taxon>Pseudomonadati</taxon>
        <taxon>Pseudomonadota</taxon>
        <taxon>Gammaproteobacteria</taxon>
        <taxon>Moraxellales</taxon>
        <taxon>Moraxellaceae</taxon>
        <taxon>Psychrobacter</taxon>
    </lineage>
</organism>
<dbReference type="EC" id="6.2.1.5" evidence="1"/>
<dbReference type="EMBL" id="CP000082">
    <property type="protein sequence ID" value="AAZ17979.1"/>
    <property type="molecule type" value="Genomic_DNA"/>
</dbReference>
<dbReference type="RefSeq" id="WP_011279418.1">
    <property type="nucleotide sequence ID" value="NC_007204.1"/>
</dbReference>
<dbReference type="SMR" id="Q4FVH9"/>
<dbReference type="STRING" id="259536.Psyc_0105"/>
<dbReference type="KEGG" id="par:Psyc_0105"/>
<dbReference type="eggNOG" id="COG0045">
    <property type="taxonomic scope" value="Bacteria"/>
</dbReference>
<dbReference type="HOGENOM" id="CLU_037430_0_2_6"/>
<dbReference type="OrthoDB" id="9802602at2"/>
<dbReference type="UniPathway" id="UPA00223">
    <property type="reaction ID" value="UER00999"/>
</dbReference>
<dbReference type="Proteomes" id="UP000000546">
    <property type="component" value="Chromosome"/>
</dbReference>
<dbReference type="GO" id="GO:0005829">
    <property type="term" value="C:cytosol"/>
    <property type="evidence" value="ECO:0007669"/>
    <property type="project" value="TreeGrafter"/>
</dbReference>
<dbReference type="GO" id="GO:0042709">
    <property type="term" value="C:succinate-CoA ligase complex"/>
    <property type="evidence" value="ECO:0007669"/>
    <property type="project" value="TreeGrafter"/>
</dbReference>
<dbReference type="GO" id="GO:0005524">
    <property type="term" value="F:ATP binding"/>
    <property type="evidence" value="ECO:0007669"/>
    <property type="project" value="UniProtKB-UniRule"/>
</dbReference>
<dbReference type="GO" id="GO:0000287">
    <property type="term" value="F:magnesium ion binding"/>
    <property type="evidence" value="ECO:0007669"/>
    <property type="project" value="UniProtKB-UniRule"/>
</dbReference>
<dbReference type="GO" id="GO:0004775">
    <property type="term" value="F:succinate-CoA ligase (ADP-forming) activity"/>
    <property type="evidence" value="ECO:0007669"/>
    <property type="project" value="UniProtKB-UniRule"/>
</dbReference>
<dbReference type="GO" id="GO:0004776">
    <property type="term" value="F:succinate-CoA ligase (GDP-forming) activity"/>
    <property type="evidence" value="ECO:0007669"/>
    <property type="project" value="RHEA"/>
</dbReference>
<dbReference type="GO" id="GO:0006104">
    <property type="term" value="P:succinyl-CoA metabolic process"/>
    <property type="evidence" value="ECO:0007669"/>
    <property type="project" value="TreeGrafter"/>
</dbReference>
<dbReference type="GO" id="GO:0006099">
    <property type="term" value="P:tricarboxylic acid cycle"/>
    <property type="evidence" value="ECO:0007669"/>
    <property type="project" value="UniProtKB-UniRule"/>
</dbReference>
<dbReference type="FunFam" id="3.30.1490.20:FF:000002">
    <property type="entry name" value="Succinate--CoA ligase [ADP-forming] subunit beta"/>
    <property type="match status" value="1"/>
</dbReference>
<dbReference type="FunFam" id="3.30.470.20:FF:000002">
    <property type="entry name" value="Succinate--CoA ligase [ADP-forming] subunit beta"/>
    <property type="match status" value="1"/>
</dbReference>
<dbReference type="FunFam" id="3.40.50.261:FF:000001">
    <property type="entry name" value="Succinate--CoA ligase [ADP-forming] subunit beta"/>
    <property type="match status" value="1"/>
</dbReference>
<dbReference type="Gene3D" id="3.30.1490.20">
    <property type="entry name" value="ATP-grasp fold, A domain"/>
    <property type="match status" value="1"/>
</dbReference>
<dbReference type="Gene3D" id="3.30.470.20">
    <property type="entry name" value="ATP-grasp fold, B domain"/>
    <property type="match status" value="1"/>
</dbReference>
<dbReference type="Gene3D" id="3.40.50.261">
    <property type="entry name" value="Succinyl-CoA synthetase domains"/>
    <property type="match status" value="1"/>
</dbReference>
<dbReference type="HAMAP" id="MF_00558">
    <property type="entry name" value="Succ_CoA_beta"/>
    <property type="match status" value="1"/>
</dbReference>
<dbReference type="InterPro" id="IPR011761">
    <property type="entry name" value="ATP-grasp"/>
</dbReference>
<dbReference type="InterPro" id="IPR013650">
    <property type="entry name" value="ATP-grasp_succ-CoA_synth-type"/>
</dbReference>
<dbReference type="InterPro" id="IPR013815">
    <property type="entry name" value="ATP_grasp_subdomain_1"/>
</dbReference>
<dbReference type="InterPro" id="IPR017866">
    <property type="entry name" value="Succ-CoA_synthase_bsu_CS"/>
</dbReference>
<dbReference type="InterPro" id="IPR005811">
    <property type="entry name" value="SUCC_ACL_C"/>
</dbReference>
<dbReference type="InterPro" id="IPR005809">
    <property type="entry name" value="Succ_CoA_ligase-like_bsu"/>
</dbReference>
<dbReference type="InterPro" id="IPR016102">
    <property type="entry name" value="Succinyl-CoA_synth-like"/>
</dbReference>
<dbReference type="NCBIfam" id="NF001913">
    <property type="entry name" value="PRK00696.1"/>
    <property type="match status" value="1"/>
</dbReference>
<dbReference type="NCBIfam" id="TIGR01016">
    <property type="entry name" value="sucCoAbeta"/>
    <property type="match status" value="1"/>
</dbReference>
<dbReference type="PANTHER" id="PTHR11815:SF10">
    <property type="entry name" value="SUCCINATE--COA LIGASE [GDP-FORMING] SUBUNIT BETA, MITOCHONDRIAL"/>
    <property type="match status" value="1"/>
</dbReference>
<dbReference type="PANTHER" id="PTHR11815">
    <property type="entry name" value="SUCCINYL-COA SYNTHETASE BETA CHAIN"/>
    <property type="match status" value="1"/>
</dbReference>
<dbReference type="Pfam" id="PF08442">
    <property type="entry name" value="ATP-grasp_2"/>
    <property type="match status" value="1"/>
</dbReference>
<dbReference type="Pfam" id="PF00549">
    <property type="entry name" value="Ligase_CoA"/>
    <property type="match status" value="1"/>
</dbReference>
<dbReference type="PIRSF" id="PIRSF001554">
    <property type="entry name" value="SucCS_beta"/>
    <property type="match status" value="1"/>
</dbReference>
<dbReference type="SUPFAM" id="SSF56059">
    <property type="entry name" value="Glutathione synthetase ATP-binding domain-like"/>
    <property type="match status" value="1"/>
</dbReference>
<dbReference type="SUPFAM" id="SSF52210">
    <property type="entry name" value="Succinyl-CoA synthetase domains"/>
    <property type="match status" value="1"/>
</dbReference>
<dbReference type="PROSITE" id="PS50975">
    <property type="entry name" value="ATP_GRASP"/>
    <property type="match status" value="1"/>
</dbReference>
<dbReference type="PROSITE" id="PS01217">
    <property type="entry name" value="SUCCINYL_COA_LIG_3"/>
    <property type="match status" value="1"/>
</dbReference>
<proteinExistence type="inferred from homology"/>
<name>SUCC_PSYA2</name>
<comment type="function">
    <text evidence="1">Succinyl-CoA synthetase functions in the citric acid cycle (TCA), coupling the hydrolysis of succinyl-CoA to the synthesis of either ATP or GTP and thus represents the only step of substrate-level phosphorylation in the TCA. The beta subunit provides nucleotide specificity of the enzyme and binds the substrate succinate, while the binding sites for coenzyme A and phosphate are found in the alpha subunit.</text>
</comment>
<comment type="catalytic activity">
    <reaction evidence="1">
        <text>succinate + ATP + CoA = succinyl-CoA + ADP + phosphate</text>
        <dbReference type="Rhea" id="RHEA:17661"/>
        <dbReference type="ChEBI" id="CHEBI:30031"/>
        <dbReference type="ChEBI" id="CHEBI:30616"/>
        <dbReference type="ChEBI" id="CHEBI:43474"/>
        <dbReference type="ChEBI" id="CHEBI:57287"/>
        <dbReference type="ChEBI" id="CHEBI:57292"/>
        <dbReference type="ChEBI" id="CHEBI:456216"/>
        <dbReference type="EC" id="6.2.1.5"/>
    </reaction>
    <physiologicalReaction direction="right-to-left" evidence="1">
        <dbReference type="Rhea" id="RHEA:17663"/>
    </physiologicalReaction>
</comment>
<comment type="catalytic activity">
    <reaction evidence="1">
        <text>GTP + succinate + CoA = succinyl-CoA + GDP + phosphate</text>
        <dbReference type="Rhea" id="RHEA:22120"/>
        <dbReference type="ChEBI" id="CHEBI:30031"/>
        <dbReference type="ChEBI" id="CHEBI:37565"/>
        <dbReference type="ChEBI" id="CHEBI:43474"/>
        <dbReference type="ChEBI" id="CHEBI:57287"/>
        <dbReference type="ChEBI" id="CHEBI:57292"/>
        <dbReference type="ChEBI" id="CHEBI:58189"/>
    </reaction>
    <physiologicalReaction direction="right-to-left" evidence="1">
        <dbReference type="Rhea" id="RHEA:22122"/>
    </physiologicalReaction>
</comment>
<comment type="cofactor">
    <cofactor evidence="1">
        <name>Mg(2+)</name>
        <dbReference type="ChEBI" id="CHEBI:18420"/>
    </cofactor>
    <text evidence="1">Binds 1 Mg(2+) ion per subunit.</text>
</comment>
<comment type="pathway">
    <text evidence="1">Carbohydrate metabolism; tricarboxylic acid cycle; succinate from succinyl-CoA (ligase route): step 1/1.</text>
</comment>
<comment type="subunit">
    <text evidence="1">Heterotetramer of two alpha and two beta subunits.</text>
</comment>
<comment type="similarity">
    <text evidence="1">Belongs to the succinate/malate CoA ligase beta subunit family.</text>
</comment>